<proteinExistence type="evidence at transcript level"/>
<keyword id="KW-0539">Nucleus</keyword>
<keyword id="KW-1185">Reference proteome</keyword>
<comment type="function">
    <text>Stress response. May play a role in the reentering of protoplasts into the cell cycle.</text>
</comment>
<comment type="subcellular location">
    <subcellularLocation>
        <location evidence="2">Nucleus</location>
    </subcellularLocation>
</comment>
<comment type="tissue specificity">
    <text>Mesophyll protoplasts.</text>
</comment>
<comment type="developmental stage">
    <text>Before reinitiation of the DNA replicational activity.</text>
</comment>
<reference key="1">
    <citation type="journal article" date="1992" name="Mech. Dev.">
        <title>Characterization of genes expressed in mesophyll protoplasts of Nicotiana sylvestris before the re-initiation of the DNA replicational activity.</title>
        <authorList>
            <person name="Criqui M.-C."/>
            <person name="Plesse B."/>
            <person name="Durr A."/>
            <person name="Marbach J."/>
            <person name="Parmentier Y."/>
            <person name="Jamet E."/>
            <person name="Fleck J."/>
        </authorList>
    </citation>
    <scope>NUCLEOTIDE SEQUENCE</scope>
    <source>
        <strain>cv. Xanthi NC</strain>
        <tissue>Protoplast</tissue>
    </source>
</reference>
<evidence type="ECO:0000255" key="1"/>
<evidence type="ECO:0000305" key="2"/>
<organism>
    <name type="scientific">Nicotiana sylvestris</name>
    <name type="common">Wood tobacco</name>
    <name type="synonym">South American tobacco</name>
    <dbReference type="NCBI Taxonomy" id="4096"/>
    <lineage>
        <taxon>Eukaryota</taxon>
        <taxon>Viridiplantae</taxon>
        <taxon>Streptophyta</taxon>
        <taxon>Embryophyta</taxon>
        <taxon>Tracheophyta</taxon>
        <taxon>Spermatophyta</taxon>
        <taxon>Magnoliopsida</taxon>
        <taxon>eudicotyledons</taxon>
        <taxon>Gunneridae</taxon>
        <taxon>Pentapetalae</taxon>
        <taxon>asterids</taxon>
        <taxon>lamiids</taxon>
        <taxon>Solanales</taxon>
        <taxon>Solanaceae</taxon>
        <taxon>Nicotianoideae</taxon>
        <taxon>Nicotianeae</taxon>
        <taxon>Nicotiana</taxon>
    </lineage>
</organism>
<sequence length="57" mass="6892">KCFDHRKERRIIDHIKTTLNHSTLYIYGSVQRSKHYYFTVCTEQGEVLYSFNQVIHS</sequence>
<name>BNP_NICSY</name>
<dbReference type="PIR" id="C56555">
    <property type="entry name" value="C56555"/>
</dbReference>
<dbReference type="Proteomes" id="UP000189701">
    <property type="component" value="Unplaced"/>
</dbReference>
<dbReference type="GO" id="GO:0005634">
    <property type="term" value="C:nucleus"/>
    <property type="evidence" value="ECO:0007669"/>
    <property type="project" value="UniProtKB-SubCell"/>
</dbReference>
<accession>Q06837</accession>
<feature type="chain" id="PRO_0000064967" description="Stress response protein">
    <location>
        <begin position="1" status="less than"/>
        <end position="57"/>
    </location>
</feature>
<feature type="short sequence motif" description="Nuclear localization signal" evidence="1">
    <location>
        <begin position="6"/>
        <end position="10"/>
    </location>
</feature>
<feature type="non-terminal residue">
    <location>
        <position position="1"/>
    </location>
</feature>
<protein>
    <recommendedName>
        <fullName>Stress response protein</fullName>
    </recommendedName>
    <alternativeName>
        <fullName>Basic protein</fullName>
    </alternativeName>
</protein>